<reference evidence="6" key="1">
    <citation type="submission" date="2005-09" db="EMBL/GenBank/DDBJ databases">
        <authorList>
            <consortium name="NIH - Mammalian Gene Collection (MGC) project"/>
        </authorList>
    </citation>
    <scope>NUCLEOTIDE SEQUENCE [LARGE SCALE MRNA]</scope>
    <source>
        <strain evidence="6">Crossbred X Angus</strain>
        <tissue evidence="6">Ileum</tissue>
    </source>
</reference>
<dbReference type="EMBL" id="BC105155">
    <property type="protein sequence ID" value="AAI05156.1"/>
    <property type="molecule type" value="mRNA"/>
</dbReference>
<dbReference type="RefSeq" id="NP_001029534.1">
    <property type="nucleotide sequence ID" value="NM_001034362.2"/>
</dbReference>
<dbReference type="SMR" id="Q3MHP8"/>
<dbReference type="FunCoup" id="Q3MHP8">
    <property type="interactions" value="1732"/>
</dbReference>
<dbReference type="STRING" id="9913.ENSBTAP00000057955"/>
<dbReference type="PaxDb" id="9913-ENSBTAP00000002289"/>
<dbReference type="Ensembl" id="ENSBTAT00000002289.3">
    <property type="protein sequence ID" value="ENSBTAP00000002289.2"/>
    <property type="gene ID" value="ENSBTAG00000001744.5"/>
</dbReference>
<dbReference type="GeneID" id="509758"/>
<dbReference type="KEGG" id="bta:509758"/>
<dbReference type="CTD" id="51272"/>
<dbReference type="VEuPathDB" id="HostDB:ENSBTAG00000001744"/>
<dbReference type="VGNC" id="VGNC:26476">
    <property type="gene designation" value="BET1L"/>
</dbReference>
<dbReference type="eggNOG" id="KOG3385">
    <property type="taxonomic scope" value="Eukaryota"/>
</dbReference>
<dbReference type="GeneTree" id="ENSGT00940000160208"/>
<dbReference type="HOGENOM" id="CLU_086133_2_2_1"/>
<dbReference type="InParanoid" id="Q3MHP8"/>
<dbReference type="OMA" id="RLMCYLI"/>
<dbReference type="OrthoDB" id="261831at2759"/>
<dbReference type="TreeFam" id="TF323307"/>
<dbReference type="Reactome" id="R-BTA-6807878">
    <property type="pathway name" value="COPI-mediated anterograde transport"/>
</dbReference>
<dbReference type="Reactome" id="R-BTA-6811438">
    <property type="pathway name" value="Intra-Golgi traffic"/>
</dbReference>
<dbReference type="Proteomes" id="UP000009136">
    <property type="component" value="Chromosome 11"/>
</dbReference>
<dbReference type="Bgee" id="ENSBTAG00000001744">
    <property type="expression patterns" value="Expressed in adenohypophysis and 103 other cell types or tissues"/>
</dbReference>
<dbReference type="GO" id="GO:0005829">
    <property type="term" value="C:cytosol"/>
    <property type="evidence" value="ECO:0007669"/>
    <property type="project" value="GOC"/>
</dbReference>
<dbReference type="GO" id="GO:0005768">
    <property type="term" value="C:endosome"/>
    <property type="evidence" value="ECO:0007669"/>
    <property type="project" value="Ensembl"/>
</dbReference>
<dbReference type="GO" id="GO:0000139">
    <property type="term" value="C:Golgi membrane"/>
    <property type="evidence" value="ECO:0007669"/>
    <property type="project" value="UniProtKB-SubCell"/>
</dbReference>
<dbReference type="GO" id="GO:0005795">
    <property type="term" value="C:Golgi stack"/>
    <property type="evidence" value="ECO:0007669"/>
    <property type="project" value="Ensembl"/>
</dbReference>
<dbReference type="GO" id="GO:0031201">
    <property type="term" value="C:SNARE complex"/>
    <property type="evidence" value="ECO:0000318"/>
    <property type="project" value="GO_Central"/>
</dbReference>
<dbReference type="GO" id="GO:0005484">
    <property type="term" value="F:SNAP receptor activity"/>
    <property type="evidence" value="ECO:0000318"/>
    <property type="project" value="GO_Central"/>
</dbReference>
<dbReference type="GO" id="GO:0015031">
    <property type="term" value="P:protein transport"/>
    <property type="evidence" value="ECO:0007669"/>
    <property type="project" value="UniProtKB-KW"/>
</dbReference>
<dbReference type="GO" id="GO:2000156">
    <property type="term" value="P:regulation of retrograde vesicle-mediated transport, Golgi to ER"/>
    <property type="evidence" value="ECO:0000318"/>
    <property type="project" value="GO_Central"/>
</dbReference>
<dbReference type="GO" id="GO:0042147">
    <property type="term" value="P:retrograde transport, endosome to Golgi"/>
    <property type="evidence" value="ECO:0000318"/>
    <property type="project" value="GO_Central"/>
</dbReference>
<dbReference type="CDD" id="cd15853">
    <property type="entry name" value="SNARE_Bet1"/>
    <property type="match status" value="1"/>
</dbReference>
<dbReference type="FunFam" id="1.20.5.110:FF:000038">
    <property type="entry name" value="BET1-like protein isoform X2"/>
    <property type="match status" value="1"/>
</dbReference>
<dbReference type="Gene3D" id="1.20.5.110">
    <property type="match status" value="1"/>
</dbReference>
<dbReference type="InterPro" id="IPR039899">
    <property type="entry name" value="BET1_SNARE"/>
</dbReference>
<dbReference type="InterPro" id="IPR000727">
    <property type="entry name" value="T_SNARE_dom"/>
</dbReference>
<dbReference type="PANTHER" id="PTHR12791">
    <property type="entry name" value="GOLGI SNARE BET1-RELATED"/>
    <property type="match status" value="1"/>
</dbReference>
<dbReference type="SUPFAM" id="SSF58038">
    <property type="entry name" value="SNARE fusion complex"/>
    <property type="match status" value="1"/>
</dbReference>
<dbReference type="PROSITE" id="PS50192">
    <property type="entry name" value="T_SNARE"/>
    <property type="match status" value="1"/>
</dbReference>
<comment type="function">
    <text evidence="2">Vesicle SNARE required for targeting and fusion of retrograde transport vesicles with the Golgi complex. Required for the integrity of the Golgi complex (By similarity).</text>
</comment>
<comment type="subunit">
    <text evidence="2 3">Component of a SNARE complex consisting of STX5, YKT6, GOSR1 and BET1L. Interacts with STX5 (By similarity).</text>
</comment>
<comment type="subcellular location">
    <subcellularLocation>
        <location evidence="1">Golgi apparatus membrane</location>
        <topology evidence="1">Single-pass type IV membrane protein</topology>
    </subcellularLocation>
    <subcellularLocation>
        <location evidence="1">Golgi apparatus</location>
        <location evidence="1">trans-Golgi network membrane</location>
    </subcellularLocation>
    <text evidence="1">Present throughout the Golgi apparatus, with increasing concentration from cis-Golgi to the trans-Golgi face of the stacks.</text>
</comment>
<evidence type="ECO:0000250" key="1"/>
<evidence type="ECO:0000250" key="2">
    <source>
        <dbReference type="UniProtKB" id="O35152"/>
    </source>
</evidence>
<evidence type="ECO:0000250" key="3">
    <source>
        <dbReference type="UniProtKB" id="Q9NYM9"/>
    </source>
</evidence>
<evidence type="ECO:0000255" key="4"/>
<evidence type="ECO:0000255" key="5">
    <source>
        <dbReference type="PROSITE-ProRule" id="PRU00202"/>
    </source>
</evidence>
<evidence type="ECO:0000312" key="6">
    <source>
        <dbReference type="EMBL" id="AAI05156.1"/>
    </source>
</evidence>
<proteinExistence type="inferred from homology"/>
<sequence>MADWARAQSPGAVEEILDRENKRMADSLASKVTRLKSLALDIDRDAEDQNRYLDGMDSDFTSMTGLLTGSVKRFSTMARSGRDNRKLLCGVAVGLIVAFFILSYLLSRART</sequence>
<keyword id="KW-0175">Coiled coil</keyword>
<keyword id="KW-0333">Golgi apparatus</keyword>
<keyword id="KW-0472">Membrane</keyword>
<keyword id="KW-0597">Phosphoprotein</keyword>
<keyword id="KW-0653">Protein transport</keyword>
<keyword id="KW-1185">Reference proteome</keyword>
<keyword id="KW-0812">Transmembrane</keyword>
<keyword id="KW-1133">Transmembrane helix</keyword>
<keyword id="KW-0813">Transport</keyword>
<organism>
    <name type="scientific">Bos taurus</name>
    <name type="common">Bovine</name>
    <dbReference type="NCBI Taxonomy" id="9913"/>
    <lineage>
        <taxon>Eukaryota</taxon>
        <taxon>Metazoa</taxon>
        <taxon>Chordata</taxon>
        <taxon>Craniata</taxon>
        <taxon>Vertebrata</taxon>
        <taxon>Euteleostomi</taxon>
        <taxon>Mammalia</taxon>
        <taxon>Eutheria</taxon>
        <taxon>Laurasiatheria</taxon>
        <taxon>Artiodactyla</taxon>
        <taxon>Ruminantia</taxon>
        <taxon>Pecora</taxon>
        <taxon>Bovidae</taxon>
        <taxon>Bovinae</taxon>
        <taxon>Bos</taxon>
    </lineage>
</organism>
<gene>
    <name evidence="2" type="primary">BET1L</name>
</gene>
<accession>Q3MHP8</accession>
<feature type="chain" id="PRO_0000233055" description="BET1-like protein">
    <location>
        <begin position="1"/>
        <end position="111"/>
    </location>
</feature>
<feature type="topological domain" description="Cytoplasmic" evidence="4">
    <location>
        <begin position="1"/>
        <end position="86"/>
    </location>
</feature>
<feature type="transmembrane region" description="Helical; Anchor for type IV membrane protein" evidence="4">
    <location>
        <begin position="87"/>
        <end position="107"/>
    </location>
</feature>
<feature type="topological domain" description="Lumenal" evidence="4">
    <location>
        <begin position="108"/>
        <end position="111"/>
    </location>
</feature>
<feature type="domain" description="t-SNARE coiled-coil homology" evidence="5">
    <location>
        <begin position="15"/>
        <end position="77"/>
    </location>
</feature>
<feature type="modified residue" description="Phosphoserine" evidence="3">
    <location>
        <position position="9"/>
    </location>
</feature>
<feature type="modified residue" description="Phosphoserine" evidence="3">
    <location>
        <position position="37"/>
    </location>
</feature>
<protein>
    <recommendedName>
        <fullName>BET1-like protein</fullName>
    </recommendedName>
</protein>
<name>BET1L_BOVIN</name>